<accession>Q9FYH1</accession>
<feature type="chain" id="PRO_0000269741" description="Histone acetyltransferase HAC2">
    <location>
        <begin position="1"/>
        <end position="1367"/>
    </location>
</feature>
<feature type="repeat" description="1">
    <location>
        <begin position="188"/>
        <end position="200"/>
    </location>
</feature>
<feature type="repeat" description="2">
    <location>
        <begin position="223"/>
        <end position="235"/>
    </location>
</feature>
<feature type="repeat" description="3">
    <location>
        <begin position="251"/>
        <end position="263"/>
    </location>
</feature>
<feature type="repeat" description="4">
    <location>
        <begin position="286"/>
        <end position="298"/>
    </location>
</feature>
<feature type="repeat" description="5">
    <location>
        <begin position="314"/>
        <end position="326"/>
    </location>
</feature>
<feature type="repeat" description="6">
    <location>
        <begin position="349"/>
        <end position="361"/>
    </location>
</feature>
<feature type="repeat" description="7">
    <location>
        <begin position="377"/>
        <end position="389"/>
    </location>
</feature>
<feature type="repeat" description="8">
    <location>
        <begin position="418"/>
        <end position="430"/>
    </location>
</feature>
<feature type="repeat" description="9">
    <location>
        <begin position="432"/>
        <end position="444"/>
    </location>
</feature>
<feature type="repeat" description="10">
    <location>
        <begin position="459"/>
        <end position="471"/>
    </location>
</feature>
<feature type="repeat" description="11">
    <location>
        <begin position="473"/>
        <end position="485"/>
    </location>
</feature>
<feature type="repeat" description="12">
    <location>
        <begin position="500"/>
        <end position="512"/>
    </location>
</feature>
<feature type="domain" description="CBP/p300-type HAT" evidence="5">
    <location>
        <begin position="780"/>
        <end position="1213"/>
    </location>
</feature>
<feature type="zinc finger region" description="PHD-type">
    <location>
        <begin position="688"/>
        <end position="765"/>
    </location>
</feature>
<feature type="zinc finger region" description="ZZ-type 1; degenerate" evidence="4">
    <location>
        <begin position="1094"/>
        <end position="1157"/>
    </location>
</feature>
<feature type="zinc finger region" description="ZZ-type 2" evidence="4">
    <location>
        <begin position="1220"/>
        <end position="1273"/>
    </location>
</feature>
<feature type="zinc finger region" description="TAZ-type" evidence="3">
    <location>
        <begin position="1274"/>
        <end position="1359"/>
    </location>
</feature>
<feature type="region of interest" description="Disordered" evidence="6">
    <location>
        <begin position="110"/>
        <end position="151"/>
    </location>
</feature>
<feature type="region of interest" description="12 X 13 AA approximate repeats">
    <location>
        <begin position="188"/>
        <end position="512"/>
    </location>
</feature>
<feature type="compositionally biased region" description="Low complexity" evidence="6">
    <location>
        <begin position="111"/>
        <end position="127"/>
    </location>
</feature>
<feature type="compositionally biased region" description="Basic and acidic residues" evidence="6">
    <location>
        <begin position="130"/>
        <end position="144"/>
    </location>
</feature>
<feature type="binding site" evidence="1">
    <location>
        <begin position="903"/>
        <end position="905"/>
    </location>
    <ligand>
        <name>acetyl-CoA</name>
        <dbReference type="ChEBI" id="CHEBI:57288"/>
    </ligand>
</feature>
<feature type="binding site" evidence="1">
    <location>
        <begin position="922"/>
        <end position="923"/>
    </location>
    <ligand>
        <name>acetyl-CoA</name>
        <dbReference type="ChEBI" id="CHEBI:57288"/>
    </ligand>
</feature>
<feature type="binding site" evidence="1">
    <location>
        <position position="978"/>
    </location>
    <ligand>
        <name>acetyl-CoA</name>
        <dbReference type="ChEBI" id="CHEBI:57288"/>
    </ligand>
</feature>
<feature type="binding site" evidence="4">
    <location>
        <position position="1099"/>
    </location>
    <ligand>
        <name>Zn(2+)</name>
        <dbReference type="ChEBI" id="CHEBI:29105"/>
        <label>1</label>
    </ligand>
</feature>
<feature type="binding site" evidence="4">
    <location>
        <position position="1102"/>
    </location>
    <ligand>
        <name>Zn(2+)</name>
        <dbReference type="ChEBI" id="CHEBI:29105"/>
        <label>1</label>
    </ligand>
</feature>
<feature type="binding site" evidence="4">
    <location>
        <position position="1123"/>
    </location>
    <ligand>
        <name>Zn(2+)</name>
        <dbReference type="ChEBI" id="CHEBI:29105"/>
        <label>1</label>
    </ligand>
</feature>
<feature type="binding site" evidence="4">
    <location>
        <position position="1126"/>
    </location>
    <ligand>
        <name>Zn(2+)</name>
        <dbReference type="ChEBI" id="CHEBI:29105"/>
        <label>1</label>
    </ligand>
</feature>
<feature type="binding site" evidence="4">
    <location>
        <position position="1225"/>
    </location>
    <ligand>
        <name>Zn(2+)</name>
        <dbReference type="ChEBI" id="CHEBI:29105"/>
        <label>2</label>
    </ligand>
</feature>
<feature type="binding site" evidence="4">
    <location>
        <position position="1228"/>
    </location>
    <ligand>
        <name>Zn(2+)</name>
        <dbReference type="ChEBI" id="CHEBI:29105"/>
        <label>2</label>
    </ligand>
</feature>
<feature type="binding site" evidence="4">
    <location>
        <position position="1240"/>
    </location>
    <ligand>
        <name>Zn(2+)</name>
        <dbReference type="ChEBI" id="CHEBI:29105"/>
        <label>3</label>
    </ligand>
</feature>
<feature type="binding site" evidence="4">
    <location>
        <position position="1243"/>
    </location>
    <ligand>
        <name>Zn(2+)</name>
        <dbReference type="ChEBI" id="CHEBI:29105"/>
        <label>3</label>
    </ligand>
</feature>
<feature type="binding site" evidence="4">
    <location>
        <position position="1249"/>
    </location>
    <ligand>
        <name>Zn(2+)</name>
        <dbReference type="ChEBI" id="CHEBI:29105"/>
        <label>2</label>
    </ligand>
</feature>
<feature type="binding site" evidence="4">
    <location>
        <position position="1252"/>
    </location>
    <ligand>
        <name>Zn(2+)</name>
        <dbReference type="ChEBI" id="CHEBI:29105"/>
        <label>2</label>
    </ligand>
</feature>
<feature type="binding site" evidence="4">
    <location>
        <position position="1261"/>
    </location>
    <ligand>
        <name>Zn(2+)</name>
        <dbReference type="ChEBI" id="CHEBI:29105"/>
        <label>3</label>
    </ligand>
</feature>
<feature type="binding site" evidence="4">
    <location>
        <position position="1263"/>
    </location>
    <ligand>
        <name>Zn(2+)</name>
        <dbReference type="ChEBI" id="CHEBI:29105"/>
        <label>3</label>
    </ligand>
</feature>
<protein>
    <recommendedName>
        <fullName>Histone acetyltransferase HAC2</fullName>
        <ecNumber evidence="2">2.3.1.48</ecNumber>
    </recommendedName>
</protein>
<sequence length="1367" mass="155772">MAPPRKRTRDLMPKFLNTESFDEFNQRLNNLPAESNVTSDEDAQFLESRKCQSKRWRKEEPLKLNLRSPWNVLCSPESISSAKFIVEKTCLIPVPSFEEAATNARRCLNTSSIPGSSGSASETNSGSDITKQDFKNDSPSDSKKVQGSSTSKSAKPKVIKVYSFVDLVTTTKKGNIQTEESSLNHEKKLGTVVDIVEPMKCDERSKEVQGSSTSKSAKPKVIKVYSFADVVTTTKKGNIQTEESSLNHEKKLGTVVDIIEPMKCDERSKEVQGSSTSKSAKLKVIKVYSFADVVTTTKKGNIQTEESSLNHEKKLGTVVDIVEPMKCDERSKEVQGSSTSKSEKPKVIKVYSFADVVTTTKKGNIQTEESSLNHEKKLGTVVDIVEPMKCDEGTKCEVTTTNKGKIHTEERSLNHEKKLGTVVDIVEPMKCDEGSKCEVTTTNKGNTQTEERSLNHEKKLGIGVDIVEPMKCDEGTKCEVTTTNKGKIQTEERSLNYEKKLGIGVDIVEPMKCDEENKCEVNADTFDVVIVEPMKCNKVTKCEVNVDTTGVNIVEPMKCNEVTKCEVNVDTIGVDIVEPMKCNEESKCEVNADTMSLQKRSKRAVSLVERFTEEEIKLHIMSLKKPSTQSAVEGMCDLKEEEESCQLCDDGTLLFPPQPLYCLLCSRRIDDRSFYYTPGEEELSNAQHQICSPCHSRCKTKFPLCGVFIDKHKMLKRSNFDNADTEEWVQCESCEKWQHQICGLYNKLKDEDKTAEYICPTCLLEECQSINNMALVDYTDSGAKDLPETVLSYFLEQRLFKRLKEERYQTAKATGKSINDVPEPEGLTLRVVFSADRTLTVNKQFASLLHKENFPSEFPYRSKVILLFQKVHGVDICIFALFVQEFGSECSQPNQRSTYIFYLDSVKYFKPERVTFAGEALRTFVYHEVLIGYLEYCKLRGFTTSYIWACPPKIGQDYIMYSHPKTQQTPDTKKLRKWYVSMLQKAAEQRVVMNVTNLYDRFFDSTEEYMTAARLPYFEGSFWSNRAEIMIQDIEREGNNELQKKVKLLSRRKVKTMSYKTTGDVDVDDVKNILLMEKLEKEVFPNKKDLMVVELNYSCTRCSKAVLSGLRWFCEKCKNLHLCESCYDAGQELPGEHIYKRMDKEKHQLSKVQVNGVLFSTTEDNDIIQENDMFESRQAFLAFSQKHNYNFHTLRHAKHSSMMILHHLHTSNKHHCSQNSSSLTCTACKKDVSTTIYFPCLLCPDYRACTGCYTKNRTLRHLHIFPTLPSANRAPSRTVMVLEILNAISHALLCQHKTTKSCSYPKCHEVKALFTHNVQCKIRKKGTRCNTCYKLWQTIRIHVYHCQDLNCPVPQCRDRKEVLIRKV</sequence>
<organism>
    <name type="scientific">Arabidopsis thaliana</name>
    <name type="common">Mouse-ear cress</name>
    <dbReference type="NCBI Taxonomy" id="3702"/>
    <lineage>
        <taxon>Eukaryota</taxon>
        <taxon>Viridiplantae</taxon>
        <taxon>Streptophyta</taxon>
        <taxon>Embryophyta</taxon>
        <taxon>Tracheophyta</taxon>
        <taxon>Spermatophyta</taxon>
        <taxon>Magnoliopsida</taxon>
        <taxon>eudicotyledons</taxon>
        <taxon>Gunneridae</taxon>
        <taxon>Pentapetalae</taxon>
        <taxon>rosids</taxon>
        <taxon>malvids</taxon>
        <taxon>Brassicales</taxon>
        <taxon>Brassicaceae</taxon>
        <taxon>Camelineae</taxon>
        <taxon>Arabidopsis</taxon>
    </lineage>
</organism>
<gene>
    <name type="primary">HAC2</name>
    <name type="synonym">PCAT1</name>
    <name type="ordered locus">At1g67220</name>
    <name type="ORF">F1N21.4</name>
</gene>
<reference key="1">
    <citation type="journal article" date="2000" name="Nature">
        <title>Sequence and analysis of chromosome 1 of the plant Arabidopsis thaliana.</title>
        <authorList>
            <person name="Theologis A."/>
            <person name="Ecker J.R."/>
            <person name="Palm C.J."/>
            <person name="Federspiel N.A."/>
            <person name="Kaul S."/>
            <person name="White O."/>
            <person name="Alonso J."/>
            <person name="Altafi H."/>
            <person name="Araujo R."/>
            <person name="Bowman C.L."/>
            <person name="Brooks S.Y."/>
            <person name="Buehler E."/>
            <person name="Chan A."/>
            <person name="Chao Q."/>
            <person name="Chen H."/>
            <person name="Cheuk R.F."/>
            <person name="Chin C.W."/>
            <person name="Chung M.K."/>
            <person name="Conn L."/>
            <person name="Conway A.B."/>
            <person name="Conway A.R."/>
            <person name="Creasy T.H."/>
            <person name="Dewar K."/>
            <person name="Dunn P."/>
            <person name="Etgu P."/>
            <person name="Feldblyum T.V."/>
            <person name="Feng J.-D."/>
            <person name="Fong B."/>
            <person name="Fujii C.Y."/>
            <person name="Gill J.E."/>
            <person name="Goldsmith A.D."/>
            <person name="Haas B."/>
            <person name="Hansen N.F."/>
            <person name="Hughes B."/>
            <person name="Huizar L."/>
            <person name="Hunter J.L."/>
            <person name="Jenkins J."/>
            <person name="Johnson-Hopson C."/>
            <person name="Khan S."/>
            <person name="Khaykin E."/>
            <person name="Kim C.J."/>
            <person name="Koo H.L."/>
            <person name="Kremenetskaia I."/>
            <person name="Kurtz D.B."/>
            <person name="Kwan A."/>
            <person name="Lam B."/>
            <person name="Langin-Hooper S."/>
            <person name="Lee A."/>
            <person name="Lee J.M."/>
            <person name="Lenz C.A."/>
            <person name="Li J.H."/>
            <person name="Li Y.-P."/>
            <person name="Lin X."/>
            <person name="Liu S.X."/>
            <person name="Liu Z.A."/>
            <person name="Luros J.S."/>
            <person name="Maiti R."/>
            <person name="Marziali A."/>
            <person name="Militscher J."/>
            <person name="Miranda M."/>
            <person name="Nguyen M."/>
            <person name="Nierman W.C."/>
            <person name="Osborne B.I."/>
            <person name="Pai G."/>
            <person name="Peterson J."/>
            <person name="Pham P.K."/>
            <person name="Rizzo M."/>
            <person name="Rooney T."/>
            <person name="Rowley D."/>
            <person name="Sakano H."/>
            <person name="Salzberg S.L."/>
            <person name="Schwartz J.R."/>
            <person name="Shinn P."/>
            <person name="Southwick A.M."/>
            <person name="Sun H."/>
            <person name="Tallon L.J."/>
            <person name="Tambunga G."/>
            <person name="Toriumi M.J."/>
            <person name="Town C.D."/>
            <person name="Utterback T."/>
            <person name="Van Aken S."/>
            <person name="Vaysberg M."/>
            <person name="Vysotskaia V.S."/>
            <person name="Walker M."/>
            <person name="Wu D."/>
            <person name="Yu G."/>
            <person name="Fraser C.M."/>
            <person name="Venter J.C."/>
            <person name="Davis R.W."/>
        </authorList>
    </citation>
    <scope>NUCLEOTIDE SEQUENCE [LARGE SCALE GENOMIC DNA]</scope>
    <source>
        <strain>cv. Columbia</strain>
    </source>
</reference>
<reference key="2">
    <citation type="journal article" date="2017" name="Plant J.">
        <title>Araport11: a complete reannotation of the Arabidopsis thaliana reference genome.</title>
        <authorList>
            <person name="Cheng C.Y."/>
            <person name="Krishnakumar V."/>
            <person name="Chan A.P."/>
            <person name="Thibaud-Nissen F."/>
            <person name="Schobel S."/>
            <person name="Town C.D."/>
        </authorList>
    </citation>
    <scope>GENOME REANNOTATION</scope>
    <source>
        <strain>cv. Columbia</strain>
    </source>
</reference>
<reference key="3">
    <citation type="journal article" date="2001" name="Nucleic Acids Res.">
        <title>Plant orthologs of p300/CBP: conservation of a core domain in metazoan p300/CBP acetyltransferase-related proteins.</title>
        <authorList>
            <person name="Bordoli L."/>
            <person name="Netsch M."/>
            <person name="Luethi U."/>
            <person name="Lutz W."/>
            <person name="Eckner R."/>
        </authorList>
    </citation>
    <scope>NUCLEOTIDE SEQUENCE [MRNA] OF 1-1357</scope>
    <scope>DEVELOPMENTAL STAGE</scope>
    <scope>TISSUE SPECIFICITY</scope>
    <scope>FUNCTION</scope>
</reference>
<reference key="4">
    <citation type="journal article" date="2002" name="Nucleic Acids Res.">
        <title>Analysis of histone acetyltransferase and histone deacetylase families of Arabidopsis thaliana suggests functional diversification of chromatin modification among multicellular eukaryotes.</title>
        <authorList>
            <person name="Pandey R."/>
            <person name="Mueller A."/>
            <person name="Napoli C.A."/>
            <person name="Selinger D.A."/>
            <person name="Pikaard C.S."/>
            <person name="Richards E.J."/>
            <person name="Bender J."/>
            <person name="Mount D.W."/>
            <person name="Jorgensen R.A."/>
        </authorList>
    </citation>
    <scope>NOMENCLATURE</scope>
</reference>
<comment type="function">
    <text evidence="2 7">Acetyltransferase enzyme. Acetylates histones, giving a specific tag for transcriptional activation (By similarity). No acetyltransferase activity found in vitro.</text>
</comment>
<comment type="catalytic activity">
    <reaction evidence="2">
        <text>L-lysyl-[protein] + acetyl-CoA = N(6)-acetyl-L-lysyl-[protein] + CoA + H(+)</text>
        <dbReference type="Rhea" id="RHEA:45948"/>
        <dbReference type="Rhea" id="RHEA-COMP:9752"/>
        <dbReference type="Rhea" id="RHEA-COMP:10731"/>
        <dbReference type="ChEBI" id="CHEBI:15378"/>
        <dbReference type="ChEBI" id="CHEBI:29969"/>
        <dbReference type="ChEBI" id="CHEBI:57287"/>
        <dbReference type="ChEBI" id="CHEBI:57288"/>
        <dbReference type="ChEBI" id="CHEBI:61930"/>
        <dbReference type="EC" id="2.3.1.48"/>
    </reaction>
</comment>
<comment type="subcellular location">
    <subcellularLocation>
        <location evidence="8">Nucleus</location>
    </subcellularLocation>
</comment>
<comment type="tissue specificity">
    <text evidence="7">Rosette leaves, stems and flowers.</text>
</comment>
<comment type="developmental stage">
    <text evidence="7">Expressed in young seedlings.</text>
</comment>
<comment type="sequence caution" evidence="8">
    <conflict type="erroneous gene model prediction">
        <sequence resource="EMBL-CDS" id="AAG00238"/>
    </conflict>
</comment>
<proteinExistence type="evidence at transcript level"/>
<name>HAC2_ARATH</name>
<keyword id="KW-0010">Activator</keyword>
<keyword id="KW-0012">Acyltransferase</keyword>
<keyword id="KW-0156">Chromatin regulator</keyword>
<keyword id="KW-0479">Metal-binding</keyword>
<keyword id="KW-0539">Nucleus</keyword>
<keyword id="KW-1185">Reference proteome</keyword>
<keyword id="KW-0677">Repeat</keyword>
<keyword id="KW-0804">Transcription</keyword>
<keyword id="KW-0805">Transcription regulation</keyword>
<keyword id="KW-0808">Transferase</keyword>
<keyword id="KW-0862">Zinc</keyword>
<keyword id="KW-0863">Zinc-finger</keyword>
<dbReference type="EC" id="2.3.1.48" evidence="2"/>
<dbReference type="EMBL" id="AC002130">
    <property type="protein sequence ID" value="AAG00238.1"/>
    <property type="status" value="ALT_SEQ"/>
    <property type="molecule type" value="Genomic_DNA"/>
</dbReference>
<dbReference type="EMBL" id="CP002684">
    <property type="protein sequence ID" value="AEE34614.1"/>
    <property type="molecule type" value="Genomic_DNA"/>
</dbReference>
<dbReference type="PIR" id="B96696">
    <property type="entry name" value="B96696"/>
</dbReference>
<dbReference type="RefSeq" id="NP_564891.4">
    <property type="nucleotide sequence ID" value="NM_105391.4"/>
</dbReference>
<dbReference type="SMR" id="Q9FYH1"/>
<dbReference type="STRING" id="3702.Q9FYH1"/>
<dbReference type="iPTMnet" id="Q9FYH1"/>
<dbReference type="PaxDb" id="3702-AT1G67220.1"/>
<dbReference type="EnsemblPlants" id="AT1G67220.1">
    <property type="protein sequence ID" value="AT1G67220.1"/>
    <property type="gene ID" value="AT1G67220"/>
</dbReference>
<dbReference type="GeneID" id="843042"/>
<dbReference type="Gramene" id="AT1G67220.1">
    <property type="protein sequence ID" value="AT1G67220.1"/>
    <property type="gene ID" value="AT1G67220"/>
</dbReference>
<dbReference type="KEGG" id="ath:AT1G67220"/>
<dbReference type="Araport" id="AT1G67220"/>
<dbReference type="TAIR" id="AT1G67220">
    <property type="gene designation" value="HAC2"/>
</dbReference>
<dbReference type="eggNOG" id="KOG1778">
    <property type="taxonomic scope" value="Eukaryota"/>
</dbReference>
<dbReference type="eggNOG" id="KOG2673">
    <property type="taxonomic scope" value="Eukaryota"/>
</dbReference>
<dbReference type="HOGENOM" id="CLU_002956_1_0_1"/>
<dbReference type="InParanoid" id="Q9FYH1"/>
<dbReference type="OrthoDB" id="899at2759"/>
<dbReference type="PRO" id="PR:Q9FYH1"/>
<dbReference type="Proteomes" id="UP000006548">
    <property type="component" value="Chromosome 1"/>
</dbReference>
<dbReference type="ExpressionAtlas" id="Q9FYH1">
    <property type="expression patterns" value="baseline and differential"/>
</dbReference>
<dbReference type="GO" id="GO:0005634">
    <property type="term" value="C:nucleus"/>
    <property type="evidence" value="ECO:0007669"/>
    <property type="project" value="UniProtKB-SubCell"/>
</dbReference>
<dbReference type="GO" id="GO:0061733">
    <property type="term" value="F:protein-lysine-acetyltransferase activity"/>
    <property type="evidence" value="ECO:0007669"/>
    <property type="project" value="RHEA"/>
</dbReference>
<dbReference type="GO" id="GO:0008270">
    <property type="term" value="F:zinc ion binding"/>
    <property type="evidence" value="ECO:0007669"/>
    <property type="project" value="UniProtKB-KW"/>
</dbReference>
<dbReference type="GO" id="GO:0006325">
    <property type="term" value="P:chromatin organization"/>
    <property type="evidence" value="ECO:0007669"/>
    <property type="project" value="UniProtKB-KW"/>
</dbReference>
<dbReference type="GO" id="GO:0006355">
    <property type="term" value="P:regulation of DNA-templated transcription"/>
    <property type="evidence" value="ECO:0007669"/>
    <property type="project" value="InterPro"/>
</dbReference>
<dbReference type="CDD" id="cd15614">
    <property type="entry name" value="PHD_HAC_like"/>
    <property type="match status" value="1"/>
</dbReference>
<dbReference type="CDD" id="cd02345">
    <property type="entry name" value="ZZ_dah"/>
    <property type="match status" value="1"/>
</dbReference>
<dbReference type="Gene3D" id="3.30.60.90">
    <property type="match status" value="2"/>
</dbReference>
<dbReference type="Gene3D" id="1.20.1020.10">
    <property type="entry name" value="TAZ domain"/>
    <property type="match status" value="1"/>
</dbReference>
<dbReference type="Gene3D" id="3.30.40.10">
    <property type="entry name" value="Zinc/RING finger domain, C3HC4 (zinc finger)"/>
    <property type="match status" value="1"/>
</dbReference>
<dbReference type="InterPro" id="IPR031162">
    <property type="entry name" value="CBP_P300_HAT"/>
</dbReference>
<dbReference type="InterPro" id="IPR013178">
    <property type="entry name" value="Histone_AcTrfase_Rtt109/CBP"/>
</dbReference>
<dbReference type="InterPro" id="IPR035898">
    <property type="entry name" value="TAZ_dom_sf"/>
</dbReference>
<dbReference type="InterPro" id="IPR011011">
    <property type="entry name" value="Znf_FYVE_PHD"/>
</dbReference>
<dbReference type="InterPro" id="IPR001965">
    <property type="entry name" value="Znf_PHD"/>
</dbReference>
<dbReference type="InterPro" id="IPR019787">
    <property type="entry name" value="Znf_PHD-finger"/>
</dbReference>
<dbReference type="InterPro" id="IPR013083">
    <property type="entry name" value="Znf_RING/FYVE/PHD"/>
</dbReference>
<dbReference type="InterPro" id="IPR000197">
    <property type="entry name" value="Znf_TAZ"/>
</dbReference>
<dbReference type="InterPro" id="IPR000433">
    <property type="entry name" value="Znf_ZZ"/>
</dbReference>
<dbReference type="InterPro" id="IPR043145">
    <property type="entry name" value="Znf_ZZ_sf"/>
</dbReference>
<dbReference type="PANTHER" id="PTHR13808">
    <property type="entry name" value="CBP/P300-RELATED"/>
    <property type="match status" value="1"/>
</dbReference>
<dbReference type="PANTHER" id="PTHR13808:SF53">
    <property type="entry name" value="HISTONE ACETYLTRANSFERASE HAC2"/>
    <property type="match status" value="1"/>
</dbReference>
<dbReference type="Pfam" id="PF08214">
    <property type="entry name" value="HAT_KAT11"/>
    <property type="match status" value="1"/>
</dbReference>
<dbReference type="Pfam" id="PF00628">
    <property type="entry name" value="PHD"/>
    <property type="match status" value="1"/>
</dbReference>
<dbReference type="Pfam" id="PF02135">
    <property type="entry name" value="zf-TAZ"/>
    <property type="match status" value="1"/>
</dbReference>
<dbReference type="Pfam" id="PF00569">
    <property type="entry name" value="ZZ"/>
    <property type="match status" value="1"/>
</dbReference>
<dbReference type="SMART" id="SM01250">
    <property type="entry name" value="KAT11"/>
    <property type="match status" value="1"/>
</dbReference>
<dbReference type="SMART" id="SM00249">
    <property type="entry name" value="PHD"/>
    <property type="match status" value="1"/>
</dbReference>
<dbReference type="SMART" id="SM00551">
    <property type="entry name" value="ZnF_TAZ"/>
    <property type="match status" value="1"/>
</dbReference>
<dbReference type="SMART" id="SM00291">
    <property type="entry name" value="ZnF_ZZ"/>
    <property type="match status" value="2"/>
</dbReference>
<dbReference type="SUPFAM" id="SSF57903">
    <property type="entry name" value="FYVE/PHD zinc finger"/>
    <property type="match status" value="1"/>
</dbReference>
<dbReference type="SUPFAM" id="SSF57850">
    <property type="entry name" value="RING/U-box"/>
    <property type="match status" value="2"/>
</dbReference>
<dbReference type="SUPFAM" id="SSF57933">
    <property type="entry name" value="TAZ domain"/>
    <property type="match status" value="1"/>
</dbReference>
<dbReference type="PROSITE" id="PS51727">
    <property type="entry name" value="CBP_P300_HAT"/>
    <property type="match status" value="1"/>
</dbReference>
<dbReference type="PROSITE" id="PS01359">
    <property type="entry name" value="ZF_PHD_1"/>
    <property type="match status" value="1"/>
</dbReference>
<dbReference type="PROSITE" id="PS50134">
    <property type="entry name" value="ZF_TAZ"/>
    <property type="match status" value="1"/>
</dbReference>
<dbReference type="PROSITE" id="PS01357">
    <property type="entry name" value="ZF_ZZ_1"/>
    <property type="match status" value="1"/>
</dbReference>
<dbReference type="PROSITE" id="PS50135">
    <property type="entry name" value="ZF_ZZ_2"/>
    <property type="match status" value="2"/>
</dbReference>
<evidence type="ECO:0000250" key="1">
    <source>
        <dbReference type="UniProtKB" id="Q09472"/>
    </source>
</evidence>
<evidence type="ECO:0000250" key="2">
    <source>
        <dbReference type="UniProtKB" id="Q9C5X9"/>
    </source>
</evidence>
<evidence type="ECO:0000255" key="3">
    <source>
        <dbReference type="PROSITE-ProRule" id="PRU00203"/>
    </source>
</evidence>
<evidence type="ECO:0000255" key="4">
    <source>
        <dbReference type="PROSITE-ProRule" id="PRU00228"/>
    </source>
</evidence>
<evidence type="ECO:0000255" key="5">
    <source>
        <dbReference type="PROSITE-ProRule" id="PRU01065"/>
    </source>
</evidence>
<evidence type="ECO:0000256" key="6">
    <source>
        <dbReference type="SAM" id="MobiDB-lite"/>
    </source>
</evidence>
<evidence type="ECO:0000269" key="7">
    <source>
    </source>
</evidence>
<evidence type="ECO:0000305" key="8"/>